<proteinExistence type="inferred from homology"/>
<accession>B4R9L7</accession>
<evidence type="ECO:0000255" key="1">
    <source>
        <dbReference type="HAMAP-Rule" id="MF_00693"/>
    </source>
</evidence>
<organism>
    <name type="scientific">Phenylobacterium zucineum (strain HLK1)</name>
    <dbReference type="NCBI Taxonomy" id="450851"/>
    <lineage>
        <taxon>Bacteria</taxon>
        <taxon>Pseudomonadati</taxon>
        <taxon>Pseudomonadota</taxon>
        <taxon>Alphaproteobacteria</taxon>
        <taxon>Caulobacterales</taxon>
        <taxon>Caulobacteraceae</taxon>
        <taxon>Phenylobacterium</taxon>
    </lineage>
</organism>
<sequence length="248" mass="26613">MAGHSKFKNIMHRKGRADAARSKLFSKLSREITVAAKTGMPDPAMNPRLRLAVQNAKAESMPKDNIDRAIKKAQGGDAETYEEIRYEGFGPGGVGVIVEALTDNRNRAAANVRSIFTKNGGNLGETNSVAFMWDRVGQIVYGPEAGSEDKVMEAAIEAGADDVESDEDGHTIWTAYDALNEVAQALEAALGAAKATRIAWRPKAMTPVSGDAAATLMKLIEALEDEDDVQNVYSNADISAEELEKLAS</sequence>
<feature type="chain" id="PRO_1000132227" description="Probable transcriptional regulatory protein PHZ_c3068">
    <location>
        <begin position="1"/>
        <end position="248"/>
    </location>
</feature>
<dbReference type="EMBL" id="CP000747">
    <property type="protein sequence ID" value="ACG79477.1"/>
    <property type="molecule type" value="Genomic_DNA"/>
</dbReference>
<dbReference type="RefSeq" id="WP_012523615.1">
    <property type="nucleotide sequence ID" value="NC_011144.1"/>
</dbReference>
<dbReference type="SMR" id="B4R9L7"/>
<dbReference type="STRING" id="450851.PHZ_c3068"/>
<dbReference type="KEGG" id="pzu:PHZ_c3068"/>
<dbReference type="eggNOG" id="COG0217">
    <property type="taxonomic scope" value="Bacteria"/>
</dbReference>
<dbReference type="HOGENOM" id="CLU_062974_2_2_5"/>
<dbReference type="OrthoDB" id="9781053at2"/>
<dbReference type="Proteomes" id="UP000001868">
    <property type="component" value="Chromosome"/>
</dbReference>
<dbReference type="GO" id="GO:0005829">
    <property type="term" value="C:cytosol"/>
    <property type="evidence" value="ECO:0007669"/>
    <property type="project" value="TreeGrafter"/>
</dbReference>
<dbReference type="GO" id="GO:0003677">
    <property type="term" value="F:DNA binding"/>
    <property type="evidence" value="ECO:0007669"/>
    <property type="project" value="UniProtKB-UniRule"/>
</dbReference>
<dbReference type="GO" id="GO:0006355">
    <property type="term" value="P:regulation of DNA-templated transcription"/>
    <property type="evidence" value="ECO:0007669"/>
    <property type="project" value="UniProtKB-UniRule"/>
</dbReference>
<dbReference type="FunFam" id="1.10.10.200:FF:000002">
    <property type="entry name" value="Probable transcriptional regulatory protein CLM62_37755"/>
    <property type="match status" value="1"/>
</dbReference>
<dbReference type="Gene3D" id="1.10.10.200">
    <property type="match status" value="1"/>
</dbReference>
<dbReference type="Gene3D" id="3.30.70.980">
    <property type="match status" value="2"/>
</dbReference>
<dbReference type="HAMAP" id="MF_00693">
    <property type="entry name" value="Transcrip_reg_TACO1"/>
    <property type="match status" value="1"/>
</dbReference>
<dbReference type="InterPro" id="IPR017856">
    <property type="entry name" value="Integrase-like_N"/>
</dbReference>
<dbReference type="InterPro" id="IPR048300">
    <property type="entry name" value="TACO1_YebC-like_2nd/3rd_dom"/>
</dbReference>
<dbReference type="InterPro" id="IPR049083">
    <property type="entry name" value="TACO1_YebC_N"/>
</dbReference>
<dbReference type="InterPro" id="IPR002876">
    <property type="entry name" value="Transcrip_reg_TACO1-like"/>
</dbReference>
<dbReference type="InterPro" id="IPR026564">
    <property type="entry name" value="Transcrip_reg_TACO1-like_dom3"/>
</dbReference>
<dbReference type="InterPro" id="IPR029072">
    <property type="entry name" value="YebC-like"/>
</dbReference>
<dbReference type="NCBIfam" id="NF001030">
    <property type="entry name" value="PRK00110.1"/>
    <property type="match status" value="1"/>
</dbReference>
<dbReference type="NCBIfam" id="NF009044">
    <property type="entry name" value="PRK12378.1"/>
    <property type="match status" value="1"/>
</dbReference>
<dbReference type="NCBIfam" id="TIGR01033">
    <property type="entry name" value="YebC/PmpR family DNA-binding transcriptional regulator"/>
    <property type="match status" value="1"/>
</dbReference>
<dbReference type="PANTHER" id="PTHR12532:SF6">
    <property type="entry name" value="TRANSCRIPTIONAL REGULATORY PROTEIN YEBC-RELATED"/>
    <property type="match status" value="1"/>
</dbReference>
<dbReference type="PANTHER" id="PTHR12532">
    <property type="entry name" value="TRANSLATIONAL ACTIVATOR OF CYTOCHROME C OXIDASE 1"/>
    <property type="match status" value="1"/>
</dbReference>
<dbReference type="Pfam" id="PF20772">
    <property type="entry name" value="TACO1_YebC_N"/>
    <property type="match status" value="1"/>
</dbReference>
<dbReference type="Pfam" id="PF01709">
    <property type="entry name" value="Transcrip_reg"/>
    <property type="match status" value="1"/>
</dbReference>
<dbReference type="SUPFAM" id="SSF75625">
    <property type="entry name" value="YebC-like"/>
    <property type="match status" value="1"/>
</dbReference>
<gene>
    <name type="ordered locus">PHZ_c3068</name>
</gene>
<comment type="subcellular location">
    <subcellularLocation>
        <location evidence="1">Cytoplasm</location>
    </subcellularLocation>
</comment>
<comment type="similarity">
    <text evidence="1">Belongs to the TACO1 family.</text>
</comment>
<protein>
    <recommendedName>
        <fullName evidence="1">Probable transcriptional regulatory protein PHZ_c3068</fullName>
    </recommendedName>
</protein>
<reference key="1">
    <citation type="journal article" date="2008" name="BMC Genomics">
        <title>Complete genome of Phenylobacterium zucineum - a novel facultative intracellular bacterium isolated from human erythroleukemia cell line K562.</title>
        <authorList>
            <person name="Luo Y."/>
            <person name="Xu X."/>
            <person name="Ding Z."/>
            <person name="Liu Z."/>
            <person name="Zhang B."/>
            <person name="Yan Z."/>
            <person name="Sun J."/>
            <person name="Hu S."/>
            <person name="Hu X."/>
        </authorList>
    </citation>
    <scope>NUCLEOTIDE SEQUENCE [LARGE SCALE GENOMIC DNA]</scope>
    <source>
        <strain>HLK1</strain>
    </source>
</reference>
<name>Y3068_PHEZH</name>
<keyword id="KW-0963">Cytoplasm</keyword>
<keyword id="KW-0238">DNA-binding</keyword>
<keyword id="KW-1185">Reference proteome</keyword>
<keyword id="KW-0804">Transcription</keyword>
<keyword id="KW-0805">Transcription regulation</keyword>